<reference key="1">
    <citation type="journal article" date="2006" name="J. Bacteriol.">
        <title>Comparison of the genome sequence of the poultry pathogen Bordetella avium with those of B. bronchiseptica, B. pertussis, and B. parapertussis reveals extensive diversity in surface structures associated with host interaction.</title>
        <authorList>
            <person name="Sebaihia M."/>
            <person name="Preston A."/>
            <person name="Maskell D.J."/>
            <person name="Kuzmiak H."/>
            <person name="Connell T.D."/>
            <person name="King N.D."/>
            <person name="Orndorff P.E."/>
            <person name="Miyamoto D.M."/>
            <person name="Thomson N.R."/>
            <person name="Harris D."/>
            <person name="Goble A."/>
            <person name="Lord A."/>
            <person name="Murphy L."/>
            <person name="Quail M.A."/>
            <person name="Rutter S."/>
            <person name="Squares R."/>
            <person name="Squares S."/>
            <person name="Woodward J."/>
            <person name="Parkhill J."/>
            <person name="Temple L.M."/>
        </authorList>
    </citation>
    <scope>NUCLEOTIDE SEQUENCE [LARGE SCALE GENOMIC DNA]</scope>
    <source>
        <strain>197N</strain>
    </source>
</reference>
<name>PANC_BORA1</name>
<keyword id="KW-0067">ATP-binding</keyword>
<keyword id="KW-0963">Cytoplasm</keyword>
<keyword id="KW-0436">Ligase</keyword>
<keyword id="KW-0547">Nucleotide-binding</keyword>
<keyword id="KW-0566">Pantothenate biosynthesis</keyword>
<keyword id="KW-1185">Reference proteome</keyword>
<accession>Q2KUK2</accession>
<dbReference type="EC" id="6.3.2.1" evidence="1"/>
<dbReference type="EMBL" id="AM167904">
    <property type="protein sequence ID" value="CAJ50658.1"/>
    <property type="molecule type" value="Genomic_DNA"/>
</dbReference>
<dbReference type="RefSeq" id="WP_012418686.1">
    <property type="nucleotide sequence ID" value="NC_010645.1"/>
</dbReference>
<dbReference type="SMR" id="Q2KUK2"/>
<dbReference type="STRING" id="360910.BAV3048"/>
<dbReference type="KEGG" id="bav:BAV3048"/>
<dbReference type="eggNOG" id="COG0414">
    <property type="taxonomic scope" value="Bacteria"/>
</dbReference>
<dbReference type="HOGENOM" id="CLU_047148_0_0_4"/>
<dbReference type="OrthoDB" id="9773087at2"/>
<dbReference type="UniPathway" id="UPA00028">
    <property type="reaction ID" value="UER00005"/>
</dbReference>
<dbReference type="Proteomes" id="UP000001977">
    <property type="component" value="Chromosome"/>
</dbReference>
<dbReference type="GO" id="GO:0005829">
    <property type="term" value="C:cytosol"/>
    <property type="evidence" value="ECO:0007669"/>
    <property type="project" value="TreeGrafter"/>
</dbReference>
<dbReference type="GO" id="GO:0005524">
    <property type="term" value="F:ATP binding"/>
    <property type="evidence" value="ECO:0007669"/>
    <property type="project" value="UniProtKB-KW"/>
</dbReference>
<dbReference type="GO" id="GO:0004592">
    <property type="term" value="F:pantoate-beta-alanine ligase activity"/>
    <property type="evidence" value="ECO:0007669"/>
    <property type="project" value="UniProtKB-UniRule"/>
</dbReference>
<dbReference type="GO" id="GO:0015940">
    <property type="term" value="P:pantothenate biosynthetic process"/>
    <property type="evidence" value="ECO:0007669"/>
    <property type="project" value="UniProtKB-UniRule"/>
</dbReference>
<dbReference type="CDD" id="cd00560">
    <property type="entry name" value="PanC"/>
    <property type="match status" value="1"/>
</dbReference>
<dbReference type="Gene3D" id="3.40.50.620">
    <property type="entry name" value="HUPs"/>
    <property type="match status" value="1"/>
</dbReference>
<dbReference type="Gene3D" id="3.30.1300.10">
    <property type="entry name" value="Pantoate-beta-alanine ligase, C-terminal domain"/>
    <property type="match status" value="1"/>
</dbReference>
<dbReference type="HAMAP" id="MF_00158">
    <property type="entry name" value="PanC"/>
    <property type="match status" value="1"/>
</dbReference>
<dbReference type="InterPro" id="IPR004821">
    <property type="entry name" value="Cyt_trans-like"/>
</dbReference>
<dbReference type="InterPro" id="IPR003721">
    <property type="entry name" value="Pantoate_ligase"/>
</dbReference>
<dbReference type="InterPro" id="IPR042176">
    <property type="entry name" value="Pantoate_ligase_C"/>
</dbReference>
<dbReference type="InterPro" id="IPR014729">
    <property type="entry name" value="Rossmann-like_a/b/a_fold"/>
</dbReference>
<dbReference type="NCBIfam" id="TIGR00125">
    <property type="entry name" value="cyt_tran_rel"/>
    <property type="match status" value="1"/>
</dbReference>
<dbReference type="NCBIfam" id="TIGR00018">
    <property type="entry name" value="panC"/>
    <property type="match status" value="1"/>
</dbReference>
<dbReference type="PANTHER" id="PTHR21299">
    <property type="entry name" value="CYTIDYLATE KINASE/PANTOATE-BETA-ALANINE LIGASE"/>
    <property type="match status" value="1"/>
</dbReference>
<dbReference type="PANTHER" id="PTHR21299:SF1">
    <property type="entry name" value="PANTOATE--BETA-ALANINE LIGASE"/>
    <property type="match status" value="1"/>
</dbReference>
<dbReference type="Pfam" id="PF02569">
    <property type="entry name" value="Pantoate_ligase"/>
    <property type="match status" value="1"/>
</dbReference>
<dbReference type="SUPFAM" id="SSF52374">
    <property type="entry name" value="Nucleotidylyl transferase"/>
    <property type="match status" value="1"/>
</dbReference>
<evidence type="ECO:0000255" key="1">
    <source>
        <dbReference type="HAMAP-Rule" id="MF_00158"/>
    </source>
</evidence>
<feature type="chain" id="PRO_0000305405" description="Pantothenate synthetase">
    <location>
        <begin position="1"/>
        <end position="280"/>
    </location>
</feature>
<feature type="active site" description="Proton donor" evidence="1">
    <location>
        <position position="33"/>
    </location>
</feature>
<feature type="binding site" evidence="1">
    <location>
        <begin position="26"/>
        <end position="33"/>
    </location>
    <ligand>
        <name>ATP</name>
        <dbReference type="ChEBI" id="CHEBI:30616"/>
    </ligand>
</feature>
<feature type="binding site" evidence="1">
    <location>
        <position position="57"/>
    </location>
    <ligand>
        <name>(R)-pantoate</name>
        <dbReference type="ChEBI" id="CHEBI:15980"/>
    </ligand>
</feature>
<feature type="binding site" evidence="1">
    <location>
        <position position="57"/>
    </location>
    <ligand>
        <name>beta-alanine</name>
        <dbReference type="ChEBI" id="CHEBI:57966"/>
    </ligand>
</feature>
<feature type="binding site" evidence="1">
    <location>
        <begin position="145"/>
        <end position="148"/>
    </location>
    <ligand>
        <name>ATP</name>
        <dbReference type="ChEBI" id="CHEBI:30616"/>
    </ligand>
</feature>
<feature type="binding site" evidence="1">
    <location>
        <position position="151"/>
    </location>
    <ligand>
        <name>(R)-pantoate</name>
        <dbReference type="ChEBI" id="CHEBI:15980"/>
    </ligand>
</feature>
<feature type="binding site" evidence="1">
    <location>
        <position position="174"/>
    </location>
    <ligand>
        <name>ATP</name>
        <dbReference type="ChEBI" id="CHEBI:30616"/>
    </ligand>
</feature>
<feature type="binding site" evidence="1">
    <location>
        <begin position="182"/>
        <end position="185"/>
    </location>
    <ligand>
        <name>ATP</name>
        <dbReference type="ChEBI" id="CHEBI:30616"/>
    </ligand>
</feature>
<comment type="function">
    <text evidence="1">Catalyzes the condensation of pantoate with beta-alanine in an ATP-dependent reaction via a pantoyl-adenylate intermediate.</text>
</comment>
<comment type="catalytic activity">
    <reaction evidence="1">
        <text>(R)-pantoate + beta-alanine + ATP = (R)-pantothenate + AMP + diphosphate + H(+)</text>
        <dbReference type="Rhea" id="RHEA:10912"/>
        <dbReference type="ChEBI" id="CHEBI:15378"/>
        <dbReference type="ChEBI" id="CHEBI:15980"/>
        <dbReference type="ChEBI" id="CHEBI:29032"/>
        <dbReference type="ChEBI" id="CHEBI:30616"/>
        <dbReference type="ChEBI" id="CHEBI:33019"/>
        <dbReference type="ChEBI" id="CHEBI:57966"/>
        <dbReference type="ChEBI" id="CHEBI:456215"/>
        <dbReference type="EC" id="6.3.2.1"/>
    </reaction>
</comment>
<comment type="pathway">
    <text evidence="1">Cofactor biosynthesis; (R)-pantothenate biosynthesis; (R)-pantothenate from (R)-pantoate and beta-alanine: step 1/1.</text>
</comment>
<comment type="subunit">
    <text evidence="1">Homodimer.</text>
</comment>
<comment type="subcellular location">
    <subcellularLocation>
        <location evidence="1">Cytoplasm</location>
    </subcellularLocation>
</comment>
<comment type="miscellaneous">
    <text evidence="1">The reaction proceeds by a bi uni uni bi ping pong mechanism.</text>
</comment>
<comment type="similarity">
    <text evidence="1">Belongs to the pantothenate synthetase family.</text>
</comment>
<sequence>MKVVHTIQDLRDHLRGQNRIAFVPTMGNLHEGHLALMKLARQHGDPVVTSIFVNRLQFGPNEDFDRYPRTLQNDIEKMDRDRDVYMVFAPDEREMYPEPQNYRVLPPDDLGDVLEGEFRPGFFQGVCTVVLKLLSCVQPRVAVFGKKDYQQLMIVRAMCRQFQLPVEIIAHETVRASDGLALSSRNRYLSVEERAEAPRLYALLGELRQRVLDGERDVAALEAEAAARLAAHGWRVDYVSLRRQHDLKTPGAADFETRQPLVALAAATLGATRLIDNLEI</sequence>
<organism>
    <name type="scientific">Bordetella avium (strain 197N)</name>
    <dbReference type="NCBI Taxonomy" id="360910"/>
    <lineage>
        <taxon>Bacteria</taxon>
        <taxon>Pseudomonadati</taxon>
        <taxon>Pseudomonadota</taxon>
        <taxon>Betaproteobacteria</taxon>
        <taxon>Burkholderiales</taxon>
        <taxon>Alcaligenaceae</taxon>
        <taxon>Bordetella</taxon>
    </lineage>
</organism>
<protein>
    <recommendedName>
        <fullName evidence="1">Pantothenate synthetase</fullName>
        <shortName evidence="1">PS</shortName>
        <ecNumber evidence="1">6.3.2.1</ecNumber>
    </recommendedName>
    <alternativeName>
        <fullName evidence="1">Pantoate--beta-alanine ligase</fullName>
    </alternativeName>
    <alternativeName>
        <fullName evidence="1">Pantoate-activating enzyme</fullName>
    </alternativeName>
</protein>
<gene>
    <name evidence="1" type="primary">panC</name>
    <name type="ordered locus">BAV3048</name>
</gene>
<proteinExistence type="inferred from homology"/>